<sequence>MSTLHKFKAYFGMVPLEDYEDDYVDDRAPRASERGGARGPRPYSERAGYGADRYGEDRYSADRFGPERFGAERFGPDRFGADRFDEDADYPEPAYKSYKSGYPVARRDDYPEDAYGEDRYEAPRRPTRIDAAPSSGRFRAGGGAPMLRGATRGALAVDPEAEERRLEERMRPEPVVARRPGIFEDGGPLSKITTLRPRDYSEARIIGERFREGNPVIMDLVELSNADAKRLVDFAAGLAFALRGSFDKVATKVFLLSPADVDVSAEERRRIAETGFYNQK</sequence>
<feature type="chain" id="PRO_0000334051" description="Cell division protein SepF">
    <location>
        <begin position="1"/>
        <end position="280"/>
    </location>
</feature>
<feature type="region of interest" description="Disordered" evidence="2">
    <location>
        <begin position="22"/>
        <end position="117"/>
    </location>
</feature>
<feature type="compositionally biased region" description="Basic and acidic residues" evidence="2">
    <location>
        <begin position="25"/>
        <end position="36"/>
    </location>
</feature>
<feature type="compositionally biased region" description="Basic and acidic residues" evidence="2">
    <location>
        <begin position="53"/>
        <end position="83"/>
    </location>
</feature>
<gene>
    <name evidence="1" type="primary">sepF</name>
    <name type="ordered locus">NFA_17720</name>
</gene>
<protein>
    <recommendedName>
        <fullName evidence="1">Cell division protein SepF</fullName>
    </recommendedName>
</protein>
<organism>
    <name type="scientific">Nocardia farcinica (strain IFM 10152)</name>
    <dbReference type="NCBI Taxonomy" id="247156"/>
    <lineage>
        <taxon>Bacteria</taxon>
        <taxon>Bacillati</taxon>
        <taxon>Actinomycetota</taxon>
        <taxon>Actinomycetes</taxon>
        <taxon>Mycobacteriales</taxon>
        <taxon>Nocardiaceae</taxon>
        <taxon>Nocardia</taxon>
    </lineage>
</organism>
<proteinExistence type="inferred from homology"/>
<dbReference type="EMBL" id="AP006618">
    <property type="protein sequence ID" value="BAD56618.1"/>
    <property type="status" value="ALT_INIT"/>
    <property type="molecule type" value="Genomic_DNA"/>
</dbReference>
<dbReference type="RefSeq" id="WP_041560009.1">
    <property type="nucleotide sequence ID" value="NC_006361.1"/>
</dbReference>
<dbReference type="SMR" id="Q5YYX3"/>
<dbReference type="STRING" id="247156.NFA_17720"/>
<dbReference type="GeneID" id="61132553"/>
<dbReference type="KEGG" id="nfa:NFA_17720"/>
<dbReference type="eggNOG" id="COG1799">
    <property type="taxonomic scope" value="Bacteria"/>
</dbReference>
<dbReference type="HOGENOM" id="CLU_078499_0_0_11"/>
<dbReference type="OrthoDB" id="3731101at2"/>
<dbReference type="Proteomes" id="UP000006820">
    <property type="component" value="Chromosome"/>
</dbReference>
<dbReference type="GO" id="GO:0005737">
    <property type="term" value="C:cytoplasm"/>
    <property type="evidence" value="ECO:0007669"/>
    <property type="project" value="UniProtKB-SubCell"/>
</dbReference>
<dbReference type="GO" id="GO:0000917">
    <property type="term" value="P:division septum assembly"/>
    <property type="evidence" value="ECO:0007669"/>
    <property type="project" value="UniProtKB-KW"/>
</dbReference>
<dbReference type="GO" id="GO:0043093">
    <property type="term" value="P:FtsZ-dependent cytokinesis"/>
    <property type="evidence" value="ECO:0007669"/>
    <property type="project" value="UniProtKB-UniRule"/>
</dbReference>
<dbReference type="FunFam" id="3.30.110.150:FF:000001">
    <property type="entry name" value="Cell division protein SepF"/>
    <property type="match status" value="1"/>
</dbReference>
<dbReference type="Gene3D" id="3.30.110.150">
    <property type="entry name" value="SepF-like protein"/>
    <property type="match status" value="1"/>
</dbReference>
<dbReference type="HAMAP" id="MF_01197">
    <property type="entry name" value="SepF"/>
    <property type="match status" value="1"/>
</dbReference>
<dbReference type="InterPro" id="IPR023052">
    <property type="entry name" value="Cell_div_SepF"/>
</dbReference>
<dbReference type="InterPro" id="IPR007561">
    <property type="entry name" value="Cell_div_SepF/SepF-rel"/>
</dbReference>
<dbReference type="InterPro" id="IPR038594">
    <property type="entry name" value="SepF-like_sf"/>
</dbReference>
<dbReference type="PANTHER" id="PTHR35798">
    <property type="entry name" value="CELL DIVISION PROTEIN SEPF"/>
    <property type="match status" value="1"/>
</dbReference>
<dbReference type="PANTHER" id="PTHR35798:SF1">
    <property type="entry name" value="CELL DIVISION PROTEIN SEPF"/>
    <property type="match status" value="1"/>
</dbReference>
<dbReference type="Pfam" id="PF04472">
    <property type="entry name" value="SepF"/>
    <property type="match status" value="1"/>
</dbReference>
<comment type="function">
    <text evidence="1">Cell division protein that is part of the divisome complex and is recruited early to the Z-ring. Probably stimulates Z-ring formation, perhaps through the cross-linking of FtsZ protofilaments. Its function overlaps with FtsA.</text>
</comment>
<comment type="subunit">
    <text evidence="1">Homodimer. Interacts with FtsZ.</text>
</comment>
<comment type="subcellular location">
    <subcellularLocation>
        <location evidence="1">Cytoplasm</location>
    </subcellularLocation>
    <text evidence="1">Localizes to the division site, in a FtsZ-dependent manner.</text>
</comment>
<comment type="similarity">
    <text evidence="1">Belongs to the SepF family.</text>
</comment>
<comment type="sequence caution" evidence="3">
    <conflict type="erroneous initiation">
        <sequence resource="EMBL-CDS" id="BAD56618"/>
    </conflict>
</comment>
<name>SEPF_NOCFA</name>
<keyword id="KW-0131">Cell cycle</keyword>
<keyword id="KW-0132">Cell division</keyword>
<keyword id="KW-0963">Cytoplasm</keyword>
<keyword id="KW-1185">Reference proteome</keyword>
<keyword id="KW-0717">Septation</keyword>
<accession>Q5YYX3</accession>
<reference key="1">
    <citation type="journal article" date="2004" name="Proc. Natl. Acad. Sci. U.S.A.">
        <title>The complete genomic sequence of Nocardia farcinica IFM 10152.</title>
        <authorList>
            <person name="Ishikawa J."/>
            <person name="Yamashita A."/>
            <person name="Mikami Y."/>
            <person name="Hoshino Y."/>
            <person name="Kurita H."/>
            <person name="Hotta K."/>
            <person name="Shiba T."/>
            <person name="Hattori M."/>
        </authorList>
    </citation>
    <scope>NUCLEOTIDE SEQUENCE [LARGE SCALE GENOMIC DNA]</scope>
    <source>
        <strain>IFM 10152</strain>
    </source>
</reference>
<evidence type="ECO:0000255" key="1">
    <source>
        <dbReference type="HAMAP-Rule" id="MF_01197"/>
    </source>
</evidence>
<evidence type="ECO:0000256" key="2">
    <source>
        <dbReference type="SAM" id="MobiDB-lite"/>
    </source>
</evidence>
<evidence type="ECO:0000305" key="3"/>